<sequence>MGHHSCCNKQKVKRGLWSPEEDEKLINYINSYGHGCWSSVPKHAGTYTHIHGFCLQRCGKSCRLRWINYLRPDLKRGSFSPQEAALIIELHSILGNRWAQIAKHLPGRTDNEVKNFWNSSIKKKLMSHHHHGHHHHHLSSMASLLTNLPYHNGFNPTTVDDESSRFMSNIITNTNPNFITPSHLSLPSPHVMTPLMFPTSREGDFKFLTTNNPNQSHHHDNNHYNNLDILSPTPTINNHHQPSLSSCPHDNNLQWPALPDFPASTISGFQETLQDYDDANKLNVFVTPFNDNAKKLLCGEVLEGKVLSSSSPISQDHGLFLPTTYNFQMTSTSDHQHHHRVDSYINHMIIPSSSSSSPISCGQYVIT</sequence>
<accession>Q9SPG3</accession>
<accession>A0MEW0</accession>
<accession>Q9LVL0</accession>
<feature type="chain" id="PRO_0000433126" description="Transcription factor MYB26">
    <location>
        <begin position="1"/>
        <end position="367"/>
    </location>
</feature>
<feature type="domain" description="HTH myb-type 1" evidence="1">
    <location>
        <begin position="9"/>
        <end position="70"/>
    </location>
</feature>
<feature type="domain" description="HTH myb-type 2" evidence="1">
    <location>
        <begin position="71"/>
        <end position="125"/>
    </location>
</feature>
<feature type="DNA-binding region" description="H-T-H motif" evidence="1">
    <location>
        <begin position="37"/>
        <end position="70"/>
    </location>
</feature>
<feature type="DNA-binding region" description="H-T-H motif" evidence="1">
    <location>
        <begin position="98"/>
        <end position="121"/>
    </location>
</feature>
<feature type="splice variant" id="VSP_057673" description="In isoform 2.">
    <location>
        <begin position="46"/>
        <end position="54"/>
    </location>
</feature>
<keyword id="KW-0025">Alternative splicing</keyword>
<keyword id="KW-0238">DNA-binding</keyword>
<keyword id="KW-0539">Nucleus</keyword>
<keyword id="KW-1185">Reference proteome</keyword>
<keyword id="KW-0677">Repeat</keyword>
<keyword id="KW-0804">Transcription</keyword>
<keyword id="KW-0805">Transcription regulation</keyword>
<organism>
    <name type="scientific">Arabidopsis thaliana</name>
    <name type="common">Mouse-ear cress</name>
    <dbReference type="NCBI Taxonomy" id="3702"/>
    <lineage>
        <taxon>Eukaryota</taxon>
        <taxon>Viridiplantae</taxon>
        <taxon>Streptophyta</taxon>
        <taxon>Embryophyta</taxon>
        <taxon>Tracheophyta</taxon>
        <taxon>Spermatophyta</taxon>
        <taxon>Magnoliopsida</taxon>
        <taxon>eudicotyledons</taxon>
        <taxon>Gunneridae</taxon>
        <taxon>Pentapetalae</taxon>
        <taxon>rosids</taxon>
        <taxon>malvids</taxon>
        <taxon>Brassicales</taxon>
        <taxon>Brassicaceae</taxon>
        <taxon>Camelineae</taxon>
        <taxon>Arabidopsis</taxon>
    </lineage>
</organism>
<dbReference type="EMBL" id="AF175997">
    <property type="protein sequence ID" value="AAD53102.1"/>
    <property type="molecule type" value="mRNA"/>
</dbReference>
<dbReference type="EMBL" id="AY519588">
    <property type="protein sequence ID" value="AAS10058.1"/>
    <property type="molecule type" value="mRNA"/>
</dbReference>
<dbReference type="EMBL" id="AB019229">
    <property type="protein sequence ID" value="BAB02319.1"/>
    <property type="molecule type" value="Genomic_DNA"/>
</dbReference>
<dbReference type="EMBL" id="CP002686">
    <property type="protein sequence ID" value="AEE75433.1"/>
    <property type="molecule type" value="Genomic_DNA"/>
</dbReference>
<dbReference type="EMBL" id="CP002686">
    <property type="protein sequence ID" value="AEE75434.1"/>
    <property type="molecule type" value="Genomic_DNA"/>
</dbReference>
<dbReference type="EMBL" id="DQ446661">
    <property type="protein sequence ID" value="ABE65939.1"/>
    <property type="molecule type" value="mRNA"/>
</dbReference>
<dbReference type="EMBL" id="DQ653083">
    <property type="protein sequence ID" value="ABK28557.1"/>
    <property type="status" value="ALT_SEQ"/>
    <property type="molecule type" value="mRNA"/>
</dbReference>
<dbReference type="RefSeq" id="NP_001078147.1">
    <molecule id="Q9SPG3-2"/>
    <property type="nucleotide sequence ID" value="NM_001084678.2"/>
</dbReference>
<dbReference type="RefSeq" id="NP_566467.2">
    <molecule id="Q9SPG3-1"/>
    <property type="nucleotide sequence ID" value="NM_112243.3"/>
</dbReference>
<dbReference type="SMR" id="Q9SPG3"/>
<dbReference type="STRING" id="3702.Q9SPG3"/>
<dbReference type="PaxDb" id="3702-AT3G13890.1"/>
<dbReference type="EnsemblPlants" id="AT3G13890.1">
    <molecule id="Q9SPG3-1"/>
    <property type="protein sequence ID" value="AT3G13890.1"/>
    <property type="gene ID" value="AT3G13890"/>
</dbReference>
<dbReference type="EnsemblPlants" id="AT3G13890.2">
    <molecule id="Q9SPG3-2"/>
    <property type="protein sequence ID" value="AT3G13890.2"/>
    <property type="gene ID" value="AT3G13890"/>
</dbReference>
<dbReference type="GeneID" id="820602"/>
<dbReference type="Gramene" id="AT3G13890.1">
    <molecule id="Q9SPG3-1"/>
    <property type="protein sequence ID" value="AT3G13890.1"/>
    <property type="gene ID" value="AT3G13890"/>
</dbReference>
<dbReference type="Gramene" id="AT3G13890.2">
    <molecule id="Q9SPG3-2"/>
    <property type="protein sequence ID" value="AT3G13890.2"/>
    <property type="gene ID" value="AT3G13890"/>
</dbReference>
<dbReference type="KEGG" id="ath:AT3G13890"/>
<dbReference type="Araport" id="AT3G13890"/>
<dbReference type="TAIR" id="AT3G13890">
    <property type="gene designation" value="MYB26"/>
</dbReference>
<dbReference type="eggNOG" id="KOG0048">
    <property type="taxonomic scope" value="Eukaryota"/>
</dbReference>
<dbReference type="HOGENOM" id="CLU_028567_1_0_1"/>
<dbReference type="InParanoid" id="Q9SPG3"/>
<dbReference type="OMA" id="FIANTNP"/>
<dbReference type="PhylomeDB" id="Q9SPG3"/>
<dbReference type="PRO" id="PR:Q9SPG3"/>
<dbReference type="Proteomes" id="UP000006548">
    <property type="component" value="Chromosome 3"/>
</dbReference>
<dbReference type="ExpressionAtlas" id="Q9SPG3">
    <property type="expression patterns" value="baseline and differential"/>
</dbReference>
<dbReference type="GO" id="GO:0005634">
    <property type="term" value="C:nucleus"/>
    <property type="evidence" value="ECO:0000314"/>
    <property type="project" value="TAIR"/>
</dbReference>
<dbReference type="GO" id="GO:0003677">
    <property type="term" value="F:DNA binding"/>
    <property type="evidence" value="ECO:0007669"/>
    <property type="project" value="UniProtKB-KW"/>
</dbReference>
<dbReference type="GO" id="GO:0003700">
    <property type="term" value="F:DNA-binding transcription factor activity"/>
    <property type="evidence" value="ECO:0000250"/>
    <property type="project" value="TAIR"/>
</dbReference>
<dbReference type="GO" id="GO:0009834">
    <property type="term" value="P:plant-type secondary cell wall biogenesis"/>
    <property type="evidence" value="ECO:0000315"/>
    <property type="project" value="TAIR"/>
</dbReference>
<dbReference type="CDD" id="cd00167">
    <property type="entry name" value="SANT"/>
    <property type="match status" value="2"/>
</dbReference>
<dbReference type="FunFam" id="1.10.10.60:FF:000047">
    <property type="entry name" value="Myb transcription factor"/>
    <property type="match status" value="1"/>
</dbReference>
<dbReference type="FunFam" id="1.10.10.60:FF:000140">
    <property type="entry name" value="Myb transcription factor"/>
    <property type="match status" value="1"/>
</dbReference>
<dbReference type="Gene3D" id="1.10.10.60">
    <property type="entry name" value="Homeodomain-like"/>
    <property type="match status" value="2"/>
</dbReference>
<dbReference type="InterPro" id="IPR009057">
    <property type="entry name" value="Homeodomain-like_sf"/>
</dbReference>
<dbReference type="InterPro" id="IPR017930">
    <property type="entry name" value="Myb_dom"/>
</dbReference>
<dbReference type="InterPro" id="IPR051953">
    <property type="entry name" value="Plant_SW-associated_TFs"/>
</dbReference>
<dbReference type="InterPro" id="IPR001005">
    <property type="entry name" value="SANT/Myb"/>
</dbReference>
<dbReference type="PANTHER" id="PTHR47997">
    <property type="entry name" value="MYB DOMAIN PROTEIN 55"/>
    <property type="match status" value="1"/>
</dbReference>
<dbReference type="PANTHER" id="PTHR47997:SF87">
    <property type="entry name" value="TRANSCRIPTION FACTOR MYB26"/>
    <property type="match status" value="1"/>
</dbReference>
<dbReference type="Pfam" id="PF00249">
    <property type="entry name" value="Myb_DNA-binding"/>
    <property type="match status" value="2"/>
</dbReference>
<dbReference type="SMART" id="SM00717">
    <property type="entry name" value="SANT"/>
    <property type="match status" value="2"/>
</dbReference>
<dbReference type="SUPFAM" id="SSF46689">
    <property type="entry name" value="Homeodomain-like"/>
    <property type="match status" value="1"/>
</dbReference>
<dbReference type="PROSITE" id="PS51294">
    <property type="entry name" value="HTH_MYB"/>
    <property type="match status" value="2"/>
</dbReference>
<proteinExistence type="evidence at transcript level"/>
<evidence type="ECO:0000255" key="1">
    <source>
        <dbReference type="PROSITE-ProRule" id="PRU00625"/>
    </source>
</evidence>
<evidence type="ECO:0000269" key="2">
    <source>
    </source>
</evidence>
<evidence type="ECO:0000269" key="3">
    <source>
    </source>
</evidence>
<evidence type="ECO:0000269" key="4">
    <source>
    </source>
</evidence>
<evidence type="ECO:0000269" key="5">
    <source>
    </source>
</evidence>
<evidence type="ECO:0000303" key="6">
    <source>
    </source>
</evidence>
<evidence type="ECO:0000303" key="7">
    <source>
    </source>
</evidence>
<evidence type="ECO:0000305" key="8"/>
<evidence type="ECO:0000312" key="9">
    <source>
        <dbReference type="Araport" id="AT3G13890"/>
    </source>
</evidence>
<evidence type="ECO:0000312" key="10">
    <source>
        <dbReference type="EMBL" id="BAB02319.1"/>
    </source>
</evidence>
<comment type="function">
    <text evidence="2 3 4">Probable transcription factor that regulates lignified secondary cell wall thickening of the anther endocethium, which is necessary for anther dehiscence (PubMed:12753590, PubMed:17147638, PubMed:17329564). May play a role in specifying early endothecial cell development by regulating a number of genes linked to secondary thickening such as NST1 and NST2. Acts upstream of the lignin biosynthesis pathway (PubMed:17329564).</text>
</comment>
<comment type="subcellular location">
    <subcellularLocation>
        <location evidence="4">Nucleus</location>
    </subcellularLocation>
</comment>
<comment type="alternative products">
    <event type="alternative splicing"/>
    <isoform>
        <id>Q9SPG3-1</id>
        <name>1</name>
        <sequence type="displayed"/>
    </isoform>
    <isoform>
        <id>Q9SPG3-2</id>
        <name>2</name>
        <sequence type="described" ref="VSP_057673"/>
    </isoform>
</comment>
<comment type="tissue specificity">
    <text evidence="2">Highly expressed in flowers.</text>
</comment>
<comment type="developmental stage">
    <text evidence="4">Expressed in anthers early during endothecial development, with maximal expression during pollen mitosis I and bicellular stages.</text>
</comment>
<comment type="induction">
    <text evidence="5">Down-regulated by auxin.</text>
</comment>
<comment type="disruption phenotype">
    <text evidence="2">Male sterility due to a defect in anther dehiscence. Fertile pollen.</text>
</comment>
<comment type="sequence caution" evidence="8">
    <conflict type="erroneous termination">
        <sequence resource="EMBL-CDS" id="ABK28557"/>
    </conflict>
    <text>Extended C-terminus.</text>
</comment>
<name>MYB26_ARATH</name>
<protein>
    <recommendedName>
        <fullName evidence="8">Transcription factor MYB26</fullName>
    </recommendedName>
    <alternativeName>
        <fullName evidence="8">Myb-related protein 26</fullName>
        <shortName evidence="6">AtMYB26</shortName>
    </alternativeName>
    <alternativeName>
        <fullName evidence="7">Protein MALE STERILE 35</fullName>
    </alternativeName>
</protein>
<reference key="1">
    <citation type="journal article" date="2001" name="Curr. Opin. Plant Biol.">
        <title>The R2R3-MYB gene family in Arabidopsis thaliana.</title>
        <authorList>
            <person name="Stracke R."/>
            <person name="Werber M."/>
            <person name="Weisshaar B."/>
        </authorList>
    </citation>
    <scope>NUCLEOTIDE SEQUENCE [MRNA] (ISOFORM 1)</scope>
    <scope>GENE FAMILY</scope>
    <scope>NOMENCLATURE</scope>
</reference>
<reference key="2">
    <citation type="submission" date="2004-01" db="EMBL/GenBank/DDBJ databases">
        <title>The MYB transcription factor family in Arabidopsis: a genome-wide cloning and expression pattern analysis.</title>
        <authorList>
            <person name="Qu L."/>
            <person name="Gu H."/>
        </authorList>
    </citation>
    <scope>NUCLEOTIDE SEQUENCE [MRNA] (ISOFORM 2)</scope>
</reference>
<reference key="3">
    <citation type="journal article" date="2000" name="DNA Res.">
        <title>Structural analysis of Arabidopsis thaliana chromosome 3. I. Sequence features of the regions of 4,504,864 bp covered by sixty P1 and TAC clones.</title>
        <authorList>
            <person name="Sato S."/>
            <person name="Nakamura Y."/>
            <person name="Kaneko T."/>
            <person name="Katoh T."/>
            <person name="Asamizu E."/>
            <person name="Tabata S."/>
        </authorList>
    </citation>
    <scope>NUCLEOTIDE SEQUENCE [LARGE SCALE GENOMIC DNA]</scope>
    <source>
        <strain>cv. Columbia</strain>
    </source>
</reference>
<reference key="4">
    <citation type="journal article" date="2017" name="Plant J.">
        <title>Araport11: a complete reannotation of the Arabidopsis thaliana reference genome.</title>
        <authorList>
            <person name="Cheng C.Y."/>
            <person name="Krishnakumar V."/>
            <person name="Chan A.P."/>
            <person name="Thibaud-Nissen F."/>
            <person name="Schobel S."/>
            <person name="Town C.D."/>
        </authorList>
    </citation>
    <scope>GENOME REANNOTATION</scope>
    <source>
        <strain>cv. Columbia</strain>
    </source>
</reference>
<reference key="5">
    <citation type="journal article" date="2006" name="Plant Biotechnol. J.">
        <title>Simultaneous high-throughput recombinational cloning of open reading frames in closed and open configurations.</title>
        <authorList>
            <person name="Underwood B.A."/>
            <person name="Vanderhaeghen R."/>
            <person name="Whitford R."/>
            <person name="Town C.D."/>
            <person name="Hilson P."/>
        </authorList>
    </citation>
    <scope>NUCLEOTIDE SEQUENCE [LARGE SCALE MRNA] (ISOFORM 2)</scope>
    <source>
        <strain>cv. Columbia</strain>
    </source>
</reference>
<reference key="6">
    <citation type="journal article" date="2003" name="Plant J.">
        <title>Disruption of Arabidopsis thaliana MYB26 results in male sterility due to non-dehiscent anthers.</title>
        <authorList>
            <person name="Steiner-Lange S."/>
            <person name="Unte U.S."/>
            <person name="Eckstein L."/>
            <person name="Yang C."/>
            <person name="Wilson Z.A."/>
            <person name="Schmelzer E."/>
            <person name="Dekker K."/>
            <person name="Saedler H."/>
        </authorList>
    </citation>
    <scope>FUNCTION</scope>
    <scope>TISSUE SPECIFICITY</scope>
    <scope>DISRUPTION PHENOTYPE</scope>
</reference>
<reference key="7">
    <citation type="journal article" date="2006" name="Plant Biotechnol. J.">
        <title>Efficient production of male and female sterile plants by expression of a chimeric repressor in Arabidopsis and rice.</title>
        <authorList>
            <person name="Mitsuda N."/>
            <person name="Hiratsu K."/>
            <person name="Todaka D."/>
            <person name="Nakashima K."/>
            <person name="Yamaguchi-Shinozaki K."/>
            <person name="Ohme-Takagi M."/>
        </authorList>
    </citation>
    <scope>FUNCTION</scope>
</reference>
<reference key="8">
    <citation type="journal article" date="2007" name="Plant Cell">
        <title>Arabidopsis MYB26/MALE STERILE35 regulates secondary thickening in the endothecium and is essential for anther dehiscence.</title>
        <authorList>
            <person name="Yang C."/>
            <person name="Xu Z."/>
            <person name="Song J."/>
            <person name="Conner K."/>
            <person name="Vizcay Barrena G."/>
            <person name="Wilson Z.A."/>
        </authorList>
    </citation>
    <scope>FUNCTION</scope>
    <scope>SUBCELLULAR LOCATION</scope>
    <scope>DEVELOPMENTAL STAGE</scope>
</reference>
<reference key="9">
    <citation type="journal article" date="2013" name="Plant J.">
        <title>Auxin controls Arabidopsis anther dehiscence by regulating endothecium lignification and jasmonic acid biosynthesis.</title>
        <authorList>
            <person name="Cecchetti V."/>
            <person name="Altamura M.M."/>
            <person name="Brunetti P."/>
            <person name="Petrocelli V."/>
            <person name="Falasca G."/>
            <person name="Ljung K."/>
            <person name="Costantino P."/>
            <person name="Cardarelli M."/>
        </authorList>
    </citation>
    <scope>INDUCTION</scope>
</reference>
<gene>
    <name evidence="6" type="primary">MYB26</name>
    <name evidence="7" type="synonym">MS35</name>
    <name evidence="9" type="ordered locus">At3g13890</name>
    <name evidence="10" type="ORF">MDC16.1</name>
</gene>